<protein>
    <recommendedName>
        <fullName>ATP-dependent RNA helicase fal1</fullName>
        <ecNumber>3.6.4.13</ecNumber>
    </recommendedName>
</protein>
<proteinExistence type="inferred from homology"/>
<keyword id="KW-0067">ATP-binding</keyword>
<keyword id="KW-0347">Helicase</keyword>
<keyword id="KW-0378">Hydrolase</keyword>
<keyword id="KW-0547">Nucleotide-binding</keyword>
<keyword id="KW-0539">Nucleus</keyword>
<keyword id="KW-1185">Reference proteome</keyword>
<keyword id="KW-0690">Ribosome biogenesis</keyword>
<keyword id="KW-0694">RNA-binding</keyword>
<keyword id="KW-0698">rRNA processing</keyword>
<sequence>MAEGIDRKMDDRMEFTTSADVTVAPTFQDMHLKENLLRGIYAYGYESPSAVQSRAIVQICKGRDTIAQAQSGTGKTATFSISMLQVIDTAVRETQALVLSPTRELATQIQSVVMALGDYMNVQCHACIGGTNVGEDIRKLDYGQHIVSGTPGRVADMIRRRNLRTRHIKMLVLDEADELLNRGFREQIYDVYRYLPPATQVVVVSATLPYDVLDMTTKFMTDPVRILVKRDELTLEGLKQYFIAVEKEDWKFDTLCDLYDTLTITQAVIFCNTRRKVDWLTDKMREANFTVSSMHGEMPQKERDSIMQDFRQGNSRVLISTDVWARGIDVQQVSLVINYDLPVNRENYIHRIGRSGRFGRKGVAINFVTSEDVRILRDIELYYSTQIDEMPMNVADLLT</sequence>
<name>FAL1_BOTFB</name>
<reference key="1">
    <citation type="journal article" date="2011" name="PLoS Genet.">
        <title>Genomic analysis of the necrotrophic fungal pathogens Sclerotinia sclerotiorum and Botrytis cinerea.</title>
        <authorList>
            <person name="Amselem J."/>
            <person name="Cuomo C.A."/>
            <person name="van Kan J.A.L."/>
            <person name="Viaud M."/>
            <person name="Benito E.P."/>
            <person name="Couloux A."/>
            <person name="Coutinho P.M."/>
            <person name="de Vries R.P."/>
            <person name="Dyer P.S."/>
            <person name="Fillinger S."/>
            <person name="Fournier E."/>
            <person name="Gout L."/>
            <person name="Hahn M."/>
            <person name="Kohn L."/>
            <person name="Lapalu N."/>
            <person name="Plummer K.M."/>
            <person name="Pradier J.-M."/>
            <person name="Quevillon E."/>
            <person name="Sharon A."/>
            <person name="Simon A."/>
            <person name="ten Have A."/>
            <person name="Tudzynski B."/>
            <person name="Tudzynski P."/>
            <person name="Wincker P."/>
            <person name="Andrew M."/>
            <person name="Anthouard V."/>
            <person name="Beever R.E."/>
            <person name="Beffa R."/>
            <person name="Benoit I."/>
            <person name="Bouzid O."/>
            <person name="Brault B."/>
            <person name="Chen Z."/>
            <person name="Choquer M."/>
            <person name="Collemare J."/>
            <person name="Cotton P."/>
            <person name="Danchin E.G."/>
            <person name="Da Silva C."/>
            <person name="Gautier A."/>
            <person name="Giraud C."/>
            <person name="Giraud T."/>
            <person name="Gonzalez C."/>
            <person name="Grossetete S."/>
            <person name="Gueldener U."/>
            <person name="Henrissat B."/>
            <person name="Howlett B.J."/>
            <person name="Kodira C."/>
            <person name="Kretschmer M."/>
            <person name="Lappartient A."/>
            <person name="Leroch M."/>
            <person name="Levis C."/>
            <person name="Mauceli E."/>
            <person name="Neuveglise C."/>
            <person name="Oeser B."/>
            <person name="Pearson M."/>
            <person name="Poulain J."/>
            <person name="Poussereau N."/>
            <person name="Quesneville H."/>
            <person name="Rascle C."/>
            <person name="Schumacher J."/>
            <person name="Segurens B."/>
            <person name="Sexton A."/>
            <person name="Silva E."/>
            <person name="Sirven C."/>
            <person name="Soanes D.M."/>
            <person name="Talbot N.J."/>
            <person name="Templeton M."/>
            <person name="Yandava C."/>
            <person name="Yarden O."/>
            <person name="Zeng Q."/>
            <person name="Rollins J.A."/>
            <person name="Lebrun M.-H."/>
            <person name="Dickman M."/>
        </authorList>
    </citation>
    <scope>NUCLEOTIDE SEQUENCE [LARGE SCALE GENOMIC DNA]</scope>
    <source>
        <strain>B05.10</strain>
    </source>
</reference>
<reference key="2">
    <citation type="journal article" date="2012" name="Eukaryot. Cell">
        <title>Genome update of Botrytis cinerea strains B05.10 and T4.</title>
        <authorList>
            <person name="Staats M."/>
            <person name="van Kan J.A.L."/>
        </authorList>
    </citation>
    <scope>NUCLEOTIDE SEQUENCE [LARGE SCALE GENOMIC DNA]</scope>
    <scope>GENOME REANNOTATION</scope>
    <source>
        <strain>B05.10</strain>
    </source>
</reference>
<reference key="3">
    <citation type="journal article" date="2017" name="Mol. Plant Pathol.">
        <title>A gapless genome sequence of the fungus Botrytis cinerea.</title>
        <authorList>
            <person name="van Kan J.A.L."/>
            <person name="Stassen J.H.M."/>
            <person name="Mosbach A."/>
            <person name="van der Lee T.A.J."/>
            <person name="Faino L."/>
            <person name="Farmer A.D."/>
            <person name="Papasotiriou D.G."/>
            <person name="Zhou S."/>
            <person name="Seidl M.F."/>
            <person name="Cottam E."/>
            <person name="Edel D."/>
            <person name="Hahn M."/>
            <person name="Schwartz D.C."/>
            <person name="Dietrich R.A."/>
            <person name="Widdison S."/>
            <person name="Scalliet G."/>
        </authorList>
    </citation>
    <scope>NUCLEOTIDE SEQUENCE [LARGE SCALE GENOMIC DNA]</scope>
    <scope>GENOME REANNOTATION</scope>
    <source>
        <strain>B05.10</strain>
    </source>
</reference>
<organism>
    <name type="scientific">Botryotinia fuckeliana (strain B05.10)</name>
    <name type="common">Noble rot fungus</name>
    <name type="synonym">Botrytis cinerea</name>
    <dbReference type="NCBI Taxonomy" id="332648"/>
    <lineage>
        <taxon>Eukaryota</taxon>
        <taxon>Fungi</taxon>
        <taxon>Dikarya</taxon>
        <taxon>Ascomycota</taxon>
        <taxon>Pezizomycotina</taxon>
        <taxon>Leotiomycetes</taxon>
        <taxon>Helotiales</taxon>
        <taxon>Sclerotiniaceae</taxon>
        <taxon>Botrytis</taxon>
    </lineage>
</organism>
<dbReference type="EC" id="3.6.4.13"/>
<dbReference type="EMBL" id="CP009806">
    <property type="protein sequence ID" value="ATZ47062.1"/>
    <property type="molecule type" value="Genomic_DNA"/>
</dbReference>
<dbReference type="RefSeq" id="XP_001553778.1">
    <property type="nucleotide sequence ID" value="XM_001553728.1"/>
</dbReference>
<dbReference type="SMR" id="A6S4N4"/>
<dbReference type="EnsemblFungi" id="Bcin02g03880.1">
    <property type="protein sequence ID" value="Bcin02p03880.1"/>
    <property type="gene ID" value="Bcin02g03880"/>
</dbReference>
<dbReference type="VEuPathDB" id="FungiDB:Bcin02g03880"/>
<dbReference type="OMA" id="TRFHDFK"/>
<dbReference type="OrthoDB" id="10265785at2759"/>
<dbReference type="Proteomes" id="UP000001798">
    <property type="component" value="Chromosome bcin02"/>
</dbReference>
<dbReference type="GO" id="GO:0030874">
    <property type="term" value="C:nucleolar chromatin"/>
    <property type="evidence" value="ECO:0007669"/>
    <property type="project" value="EnsemblFungi"/>
</dbReference>
<dbReference type="GO" id="GO:0005524">
    <property type="term" value="F:ATP binding"/>
    <property type="evidence" value="ECO:0007669"/>
    <property type="project" value="UniProtKB-KW"/>
</dbReference>
<dbReference type="GO" id="GO:0016887">
    <property type="term" value="F:ATP hydrolysis activity"/>
    <property type="evidence" value="ECO:0007669"/>
    <property type="project" value="RHEA"/>
</dbReference>
<dbReference type="GO" id="GO:0003723">
    <property type="term" value="F:RNA binding"/>
    <property type="evidence" value="ECO:0007669"/>
    <property type="project" value="UniProtKB-KW"/>
</dbReference>
<dbReference type="GO" id="GO:0003724">
    <property type="term" value="F:RNA helicase activity"/>
    <property type="evidence" value="ECO:0007669"/>
    <property type="project" value="UniProtKB-EC"/>
</dbReference>
<dbReference type="GO" id="GO:0006364">
    <property type="term" value="P:rRNA processing"/>
    <property type="evidence" value="ECO:0007669"/>
    <property type="project" value="UniProtKB-KW"/>
</dbReference>
<dbReference type="CDD" id="cd18045">
    <property type="entry name" value="DEADc_EIF4AIII_DDX48"/>
    <property type="match status" value="1"/>
</dbReference>
<dbReference type="CDD" id="cd18787">
    <property type="entry name" value="SF2_C_DEAD"/>
    <property type="match status" value="1"/>
</dbReference>
<dbReference type="FunFam" id="3.40.50.300:FF:000031">
    <property type="entry name" value="Eukaryotic initiation factor 4A-III"/>
    <property type="match status" value="1"/>
</dbReference>
<dbReference type="FunFam" id="3.40.50.300:FF:000498">
    <property type="entry name" value="Eukaryotic initiation factor 4A-III"/>
    <property type="match status" value="1"/>
</dbReference>
<dbReference type="Gene3D" id="3.40.50.300">
    <property type="entry name" value="P-loop containing nucleotide triphosphate hydrolases"/>
    <property type="match status" value="2"/>
</dbReference>
<dbReference type="InterPro" id="IPR011545">
    <property type="entry name" value="DEAD/DEAH_box_helicase_dom"/>
</dbReference>
<dbReference type="InterPro" id="IPR014001">
    <property type="entry name" value="Helicase_ATP-bd"/>
</dbReference>
<dbReference type="InterPro" id="IPR001650">
    <property type="entry name" value="Helicase_C-like"/>
</dbReference>
<dbReference type="InterPro" id="IPR027417">
    <property type="entry name" value="P-loop_NTPase"/>
</dbReference>
<dbReference type="InterPro" id="IPR000629">
    <property type="entry name" value="RNA-helicase_DEAD-box_CS"/>
</dbReference>
<dbReference type="InterPro" id="IPR014014">
    <property type="entry name" value="RNA_helicase_DEAD_Q_motif"/>
</dbReference>
<dbReference type="PANTHER" id="PTHR47958">
    <property type="entry name" value="ATP-DEPENDENT RNA HELICASE DBP3"/>
    <property type="match status" value="1"/>
</dbReference>
<dbReference type="Pfam" id="PF00270">
    <property type="entry name" value="DEAD"/>
    <property type="match status" value="1"/>
</dbReference>
<dbReference type="Pfam" id="PF00271">
    <property type="entry name" value="Helicase_C"/>
    <property type="match status" value="1"/>
</dbReference>
<dbReference type="SMART" id="SM00487">
    <property type="entry name" value="DEXDc"/>
    <property type="match status" value="1"/>
</dbReference>
<dbReference type="SMART" id="SM00490">
    <property type="entry name" value="HELICc"/>
    <property type="match status" value="1"/>
</dbReference>
<dbReference type="SUPFAM" id="SSF52540">
    <property type="entry name" value="P-loop containing nucleoside triphosphate hydrolases"/>
    <property type="match status" value="1"/>
</dbReference>
<dbReference type="PROSITE" id="PS00039">
    <property type="entry name" value="DEAD_ATP_HELICASE"/>
    <property type="match status" value="1"/>
</dbReference>
<dbReference type="PROSITE" id="PS51192">
    <property type="entry name" value="HELICASE_ATP_BIND_1"/>
    <property type="match status" value="1"/>
</dbReference>
<dbReference type="PROSITE" id="PS51194">
    <property type="entry name" value="HELICASE_CTER"/>
    <property type="match status" value="1"/>
</dbReference>
<dbReference type="PROSITE" id="PS51195">
    <property type="entry name" value="Q_MOTIF"/>
    <property type="match status" value="1"/>
</dbReference>
<gene>
    <name type="primary">fal1</name>
    <name type="ORF">BC1G_07971</name>
    <name type="ORF">BCIN_02g03880</name>
</gene>
<accession>A6S4N4</accession>
<accession>A0A384J9E0</accession>
<comment type="function">
    <text evidence="1">ATP-dependent RNA helicase involved in 40S ribosomal subunit biogenesis. Required for the processing and cleavage of 35S pre-rRNA at sites A0, A1, and A2, leading to mature 18S rRNA (By similarity).</text>
</comment>
<comment type="catalytic activity">
    <reaction>
        <text>ATP + H2O = ADP + phosphate + H(+)</text>
        <dbReference type="Rhea" id="RHEA:13065"/>
        <dbReference type="ChEBI" id="CHEBI:15377"/>
        <dbReference type="ChEBI" id="CHEBI:15378"/>
        <dbReference type="ChEBI" id="CHEBI:30616"/>
        <dbReference type="ChEBI" id="CHEBI:43474"/>
        <dbReference type="ChEBI" id="CHEBI:456216"/>
        <dbReference type="EC" id="3.6.4.13"/>
    </reaction>
</comment>
<comment type="subcellular location">
    <subcellularLocation>
        <location evidence="1">Nucleus</location>
        <location evidence="1">Nucleolus</location>
    </subcellularLocation>
</comment>
<comment type="domain">
    <text>The Q motif is unique to and characteristic of the DEAD box family of RNA helicases and controls ATP binding and hydrolysis.</text>
</comment>
<comment type="similarity">
    <text evidence="4">Belongs to the DEAD box helicase family. DDX48/FAL1 subfamily.</text>
</comment>
<feature type="chain" id="PRO_0000310176" description="ATP-dependent RNA helicase fal1">
    <location>
        <begin position="1"/>
        <end position="399"/>
    </location>
</feature>
<feature type="domain" description="Helicase ATP-binding" evidence="2">
    <location>
        <begin position="56"/>
        <end position="226"/>
    </location>
</feature>
<feature type="domain" description="Helicase C-terminal" evidence="3">
    <location>
        <begin position="237"/>
        <end position="398"/>
    </location>
</feature>
<feature type="short sequence motif" description="Q motif">
    <location>
        <begin position="25"/>
        <end position="53"/>
    </location>
</feature>
<feature type="short sequence motif" description="DEAD box">
    <location>
        <begin position="174"/>
        <end position="177"/>
    </location>
</feature>
<feature type="binding site" evidence="2">
    <location>
        <begin position="69"/>
        <end position="76"/>
    </location>
    <ligand>
        <name>ATP</name>
        <dbReference type="ChEBI" id="CHEBI:30616"/>
    </ligand>
</feature>
<evidence type="ECO:0000250" key="1"/>
<evidence type="ECO:0000255" key="2">
    <source>
        <dbReference type="PROSITE-ProRule" id="PRU00541"/>
    </source>
</evidence>
<evidence type="ECO:0000255" key="3">
    <source>
        <dbReference type="PROSITE-ProRule" id="PRU00542"/>
    </source>
</evidence>
<evidence type="ECO:0000305" key="4"/>